<reference key="1">
    <citation type="journal article" date="2005" name="PLoS Biol.">
        <title>The genome sequence of Rickettsia felis identifies the first putative conjugative plasmid in an obligate intracellular parasite.</title>
        <authorList>
            <person name="Ogata H."/>
            <person name="Renesto P."/>
            <person name="Audic S."/>
            <person name="Robert C."/>
            <person name="Blanc G."/>
            <person name="Fournier P.-E."/>
            <person name="Parinello H."/>
            <person name="Claverie J.-M."/>
            <person name="Raoult D."/>
        </authorList>
    </citation>
    <scope>NUCLEOTIDE SEQUENCE [LARGE SCALE GENOMIC DNA]</scope>
    <source>
        <strain>ATCC VR-1525 / URRWXCal2</strain>
    </source>
</reference>
<dbReference type="EC" id="3.6.5.4" evidence="1"/>
<dbReference type="EMBL" id="CP000053">
    <property type="protein sequence ID" value="AAY62089.1"/>
    <property type="molecule type" value="Genomic_DNA"/>
</dbReference>
<dbReference type="SMR" id="Q4UK46"/>
<dbReference type="STRING" id="315456.RF_1238"/>
<dbReference type="KEGG" id="rfe:RF_1238"/>
<dbReference type="eggNOG" id="COG0552">
    <property type="taxonomic scope" value="Bacteria"/>
</dbReference>
<dbReference type="HOGENOM" id="CLU_009301_3_4_5"/>
<dbReference type="OrthoDB" id="9804720at2"/>
<dbReference type="Proteomes" id="UP000008548">
    <property type="component" value="Chromosome"/>
</dbReference>
<dbReference type="GO" id="GO:0005737">
    <property type="term" value="C:cytoplasm"/>
    <property type="evidence" value="ECO:0007669"/>
    <property type="project" value="UniProtKB-SubCell"/>
</dbReference>
<dbReference type="GO" id="GO:0005886">
    <property type="term" value="C:plasma membrane"/>
    <property type="evidence" value="ECO:0007669"/>
    <property type="project" value="UniProtKB-SubCell"/>
</dbReference>
<dbReference type="GO" id="GO:0016887">
    <property type="term" value="F:ATP hydrolysis activity"/>
    <property type="evidence" value="ECO:0007669"/>
    <property type="project" value="InterPro"/>
</dbReference>
<dbReference type="GO" id="GO:0005525">
    <property type="term" value="F:GTP binding"/>
    <property type="evidence" value="ECO:0007669"/>
    <property type="project" value="UniProtKB-UniRule"/>
</dbReference>
<dbReference type="GO" id="GO:0003924">
    <property type="term" value="F:GTPase activity"/>
    <property type="evidence" value="ECO:0007669"/>
    <property type="project" value="UniProtKB-UniRule"/>
</dbReference>
<dbReference type="GO" id="GO:0005047">
    <property type="term" value="F:signal recognition particle binding"/>
    <property type="evidence" value="ECO:0007669"/>
    <property type="project" value="TreeGrafter"/>
</dbReference>
<dbReference type="GO" id="GO:0006614">
    <property type="term" value="P:SRP-dependent cotranslational protein targeting to membrane"/>
    <property type="evidence" value="ECO:0007669"/>
    <property type="project" value="InterPro"/>
</dbReference>
<dbReference type="CDD" id="cd17874">
    <property type="entry name" value="FtsY"/>
    <property type="match status" value="1"/>
</dbReference>
<dbReference type="FunFam" id="3.40.50.300:FF:000053">
    <property type="entry name" value="Signal recognition particle receptor FtsY"/>
    <property type="match status" value="1"/>
</dbReference>
<dbReference type="Gene3D" id="3.40.50.300">
    <property type="entry name" value="P-loop containing nucleotide triphosphate hydrolases"/>
    <property type="match status" value="1"/>
</dbReference>
<dbReference type="Gene3D" id="1.20.120.140">
    <property type="entry name" value="Signal recognition particle SRP54, nucleotide-binding domain"/>
    <property type="match status" value="1"/>
</dbReference>
<dbReference type="HAMAP" id="MF_00920">
    <property type="entry name" value="FtsY"/>
    <property type="match status" value="1"/>
</dbReference>
<dbReference type="InterPro" id="IPR003593">
    <property type="entry name" value="AAA+_ATPase"/>
</dbReference>
<dbReference type="InterPro" id="IPR027417">
    <property type="entry name" value="P-loop_NTPase"/>
</dbReference>
<dbReference type="InterPro" id="IPR013822">
    <property type="entry name" value="Signal_recog_particl_SRP54_hlx"/>
</dbReference>
<dbReference type="InterPro" id="IPR004390">
    <property type="entry name" value="SR_rcpt_FtsY"/>
</dbReference>
<dbReference type="InterPro" id="IPR036225">
    <property type="entry name" value="SRP/SRP_N"/>
</dbReference>
<dbReference type="InterPro" id="IPR000897">
    <property type="entry name" value="SRP54_GTPase_dom"/>
</dbReference>
<dbReference type="InterPro" id="IPR042101">
    <property type="entry name" value="SRP54_N_sf"/>
</dbReference>
<dbReference type="NCBIfam" id="TIGR00064">
    <property type="entry name" value="ftsY"/>
    <property type="match status" value="1"/>
</dbReference>
<dbReference type="PANTHER" id="PTHR43134">
    <property type="entry name" value="SIGNAL RECOGNITION PARTICLE RECEPTOR SUBUNIT ALPHA"/>
    <property type="match status" value="1"/>
</dbReference>
<dbReference type="PANTHER" id="PTHR43134:SF1">
    <property type="entry name" value="SIGNAL RECOGNITION PARTICLE RECEPTOR SUBUNIT ALPHA"/>
    <property type="match status" value="1"/>
</dbReference>
<dbReference type="Pfam" id="PF00448">
    <property type="entry name" value="SRP54"/>
    <property type="match status" value="1"/>
</dbReference>
<dbReference type="Pfam" id="PF02881">
    <property type="entry name" value="SRP54_N"/>
    <property type="match status" value="1"/>
</dbReference>
<dbReference type="SMART" id="SM00382">
    <property type="entry name" value="AAA"/>
    <property type="match status" value="1"/>
</dbReference>
<dbReference type="SMART" id="SM00962">
    <property type="entry name" value="SRP54"/>
    <property type="match status" value="1"/>
</dbReference>
<dbReference type="SMART" id="SM00963">
    <property type="entry name" value="SRP54_N"/>
    <property type="match status" value="1"/>
</dbReference>
<dbReference type="SUPFAM" id="SSF47364">
    <property type="entry name" value="Domain of the SRP/SRP receptor G-proteins"/>
    <property type="match status" value="1"/>
</dbReference>
<dbReference type="SUPFAM" id="SSF52540">
    <property type="entry name" value="P-loop containing nucleoside triphosphate hydrolases"/>
    <property type="match status" value="1"/>
</dbReference>
<dbReference type="PROSITE" id="PS00300">
    <property type="entry name" value="SRP54"/>
    <property type="match status" value="1"/>
</dbReference>
<organism>
    <name type="scientific">Rickettsia felis (strain ATCC VR-1525 / URRWXCal2)</name>
    <name type="common">Rickettsia azadi</name>
    <dbReference type="NCBI Taxonomy" id="315456"/>
    <lineage>
        <taxon>Bacteria</taxon>
        <taxon>Pseudomonadati</taxon>
        <taxon>Pseudomonadota</taxon>
        <taxon>Alphaproteobacteria</taxon>
        <taxon>Rickettsiales</taxon>
        <taxon>Rickettsiaceae</taxon>
        <taxon>Rickettsieae</taxon>
        <taxon>Rickettsia</taxon>
        <taxon>spotted fever group</taxon>
    </lineage>
</organism>
<sequence>MISIFSKLKQSLSKTSNKISKGIDKIFYKKKLDTETLEELEELLIASDMSVSVVTNIIEEFKKVKFDKEIDSDTVKEALAELIEQQLSKSEIPFTLNENKLNVILVCGVNGAGKTTTIGKLAAMYGMQGKKVAVAACDTFRAAAVNQLSTWVDRANALLITGEESADPASVAYRAMEESIKQNIDILFIDTAGRLHNKKNLMDELSKIVKVIKKLDENAPTHSVLVIDAITGQNTYNQVEHFNDATNLTGLIVTKLDGSAKAGVLVGVVQKFNLPVYFIGIGEKIEDLKIFNRHDFAKSLVGL</sequence>
<protein>
    <recommendedName>
        <fullName evidence="1">Signal recognition particle receptor FtsY</fullName>
        <shortName evidence="1">SRP receptor</shortName>
        <ecNumber evidence="1">3.6.5.4</ecNumber>
    </recommendedName>
</protein>
<keyword id="KW-0997">Cell inner membrane</keyword>
<keyword id="KW-1003">Cell membrane</keyword>
<keyword id="KW-0963">Cytoplasm</keyword>
<keyword id="KW-0342">GTP-binding</keyword>
<keyword id="KW-0378">Hydrolase</keyword>
<keyword id="KW-0472">Membrane</keyword>
<keyword id="KW-0547">Nucleotide-binding</keyword>
<keyword id="KW-0675">Receptor</keyword>
<name>FTSY_RICFE</name>
<comment type="function">
    <text evidence="1">Involved in targeting and insertion of nascent membrane proteins into the cytoplasmic membrane. Acts as a receptor for the complex formed by the signal recognition particle (SRP) and the ribosome-nascent chain (RNC). Interaction with SRP-RNC leads to the transfer of the RNC complex to the Sec translocase for insertion into the membrane, the hydrolysis of GTP by both Ffh and FtsY, and the dissociation of the SRP-FtsY complex into the individual components.</text>
</comment>
<comment type="catalytic activity">
    <reaction evidence="1">
        <text>GTP + H2O = GDP + phosphate + H(+)</text>
        <dbReference type="Rhea" id="RHEA:19669"/>
        <dbReference type="ChEBI" id="CHEBI:15377"/>
        <dbReference type="ChEBI" id="CHEBI:15378"/>
        <dbReference type="ChEBI" id="CHEBI:37565"/>
        <dbReference type="ChEBI" id="CHEBI:43474"/>
        <dbReference type="ChEBI" id="CHEBI:58189"/>
        <dbReference type="EC" id="3.6.5.4"/>
    </reaction>
</comment>
<comment type="subunit">
    <text evidence="1">Part of the signal recognition particle protein translocation system, which is composed of SRP and FtsY. SRP is a ribonucleoprotein composed of Ffh and a 4.5S RNA molecule.</text>
</comment>
<comment type="subcellular location">
    <subcellularLocation>
        <location>Cell inner membrane</location>
        <topology>Peripheral membrane protein</topology>
        <orientation>Cytoplasmic side</orientation>
    </subcellularLocation>
    <subcellularLocation>
        <location evidence="1">Cytoplasm</location>
    </subcellularLocation>
</comment>
<comment type="similarity">
    <text evidence="1">Belongs to the GTP-binding SRP family. FtsY subfamily.</text>
</comment>
<accession>Q4UK46</accession>
<gene>
    <name evidence="1" type="primary">ftsY</name>
    <name type="ordered locus">RF_1238</name>
</gene>
<feature type="chain" id="PRO_0000286496" description="Signal recognition particle receptor FtsY">
    <location>
        <begin position="1"/>
        <end position="303"/>
    </location>
</feature>
<feature type="binding site" evidence="1">
    <location>
        <begin position="108"/>
        <end position="115"/>
    </location>
    <ligand>
        <name>GTP</name>
        <dbReference type="ChEBI" id="CHEBI:37565"/>
    </ligand>
</feature>
<feature type="binding site" evidence="1">
    <location>
        <begin position="190"/>
        <end position="194"/>
    </location>
    <ligand>
        <name>GTP</name>
        <dbReference type="ChEBI" id="CHEBI:37565"/>
    </ligand>
</feature>
<feature type="binding site" evidence="1">
    <location>
        <begin position="254"/>
        <end position="257"/>
    </location>
    <ligand>
        <name>GTP</name>
        <dbReference type="ChEBI" id="CHEBI:37565"/>
    </ligand>
</feature>
<proteinExistence type="inferred from homology"/>
<evidence type="ECO:0000255" key="1">
    <source>
        <dbReference type="HAMAP-Rule" id="MF_00920"/>
    </source>
</evidence>